<evidence type="ECO:0000255" key="1">
    <source>
        <dbReference type="HAMAP-Rule" id="MF_01849"/>
    </source>
</evidence>
<evidence type="ECO:0000255" key="2">
    <source>
        <dbReference type="PROSITE-ProRule" id="PRU01266"/>
    </source>
</evidence>
<evidence type="ECO:0000256" key="3">
    <source>
        <dbReference type="SAM" id="MobiDB-lite"/>
    </source>
</evidence>
<evidence type="ECO:0000305" key="4"/>
<protein>
    <recommendedName>
        <fullName evidence="1">Probable dual-specificity RNA methyltransferase RlmN</fullName>
        <ecNumber evidence="1">2.1.1.192</ecNumber>
    </recommendedName>
    <alternativeName>
        <fullName evidence="1">23S rRNA (adenine(2503)-C(2))-methyltransferase</fullName>
    </alternativeName>
    <alternativeName>
        <fullName evidence="1">23S rRNA m2A2503 methyltransferase</fullName>
    </alternativeName>
    <alternativeName>
        <fullName evidence="1">Ribosomal RNA large subunit methyltransferase N</fullName>
    </alternativeName>
    <alternativeName>
        <fullName evidence="1">tRNA (adenine(37)-C(2))-methyltransferase</fullName>
    </alternativeName>
    <alternativeName>
        <fullName evidence="1">tRNA m2A37 methyltransferase</fullName>
    </alternativeName>
</protein>
<comment type="function">
    <text evidence="1">Specifically methylates position 2 of adenine 2503 in 23S rRNA and position 2 of adenine 37 in tRNAs.</text>
</comment>
<comment type="catalytic activity">
    <reaction evidence="1">
        <text>adenosine(2503) in 23S rRNA + 2 reduced [2Fe-2S]-[ferredoxin] + 2 S-adenosyl-L-methionine = 2-methyladenosine(2503) in 23S rRNA + 5'-deoxyadenosine + L-methionine + 2 oxidized [2Fe-2S]-[ferredoxin] + S-adenosyl-L-homocysteine</text>
        <dbReference type="Rhea" id="RHEA:42916"/>
        <dbReference type="Rhea" id="RHEA-COMP:10000"/>
        <dbReference type="Rhea" id="RHEA-COMP:10001"/>
        <dbReference type="Rhea" id="RHEA-COMP:10152"/>
        <dbReference type="Rhea" id="RHEA-COMP:10282"/>
        <dbReference type="ChEBI" id="CHEBI:17319"/>
        <dbReference type="ChEBI" id="CHEBI:33737"/>
        <dbReference type="ChEBI" id="CHEBI:33738"/>
        <dbReference type="ChEBI" id="CHEBI:57844"/>
        <dbReference type="ChEBI" id="CHEBI:57856"/>
        <dbReference type="ChEBI" id="CHEBI:59789"/>
        <dbReference type="ChEBI" id="CHEBI:74411"/>
        <dbReference type="ChEBI" id="CHEBI:74497"/>
        <dbReference type="EC" id="2.1.1.192"/>
    </reaction>
</comment>
<comment type="catalytic activity">
    <reaction evidence="1">
        <text>adenosine(37) in tRNA + 2 reduced [2Fe-2S]-[ferredoxin] + 2 S-adenosyl-L-methionine = 2-methyladenosine(37) in tRNA + 5'-deoxyadenosine + L-methionine + 2 oxidized [2Fe-2S]-[ferredoxin] + S-adenosyl-L-homocysteine</text>
        <dbReference type="Rhea" id="RHEA:43332"/>
        <dbReference type="Rhea" id="RHEA-COMP:10000"/>
        <dbReference type="Rhea" id="RHEA-COMP:10001"/>
        <dbReference type="Rhea" id="RHEA-COMP:10162"/>
        <dbReference type="Rhea" id="RHEA-COMP:10485"/>
        <dbReference type="ChEBI" id="CHEBI:17319"/>
        <dbReference type="ChEBI" id="CHEBI:33737"/>
        <dbReference type="ChEBI" id="CHEBI:33738"/>
        <dbReference type="ChEBI" id="CHEBI:57844"/>
        <dbReference type="ChEBI" id="CHEBI:57856"/>
        <dbReference type="ChEBI" id="CHEBI:59789"/>
        <dbReference type="ChEBI" id="CHEBI:74411"/>
        <dbReference type="ChEBI" id="CHEBI:74497"/>
        <dbReference type="EC" id="2.1.1.192"/>
    </reaction>
</comment>
<comment type="cofactor">
    <cofactor evidence="1">
        <name>[4Fe-4S] cluster</name>
        <dbReference type="ChEBI" id="CHEBI:49883"/>
    </cofactor>
    <text evidence="1">Binds 1 [4Fe-4S] cluster. The cluster is coordinated with 3 cysteines and an exchangeable S-adenosyl-L-methionine.</text>
</comment>
<comment type="subcellular location">
    <subcellularLocation>
        <location evidence="1">Cytoplasm</location>
    </subcellularLocation>
</comment>
<comment type="miscellaneous">
    <text evidence="1">Reaction proceeds by a ping-pong mechanism involving intermediate methylation of a conserved cysteine residue.</text>
</comment>
<comment type="similarity">
    <text evidence="1">Belongs to the radical SAM superfamily. RlmN family.</text>
</comment>
<comment type="sequence caution" evidence="4">
    <conflict type="erroneous initiation">
        <sequence resource="EMBL-CDS" id="BAB72313"/>
    </conflict>
</comment>
<sequence length="355" mass="39332">MSATPVTQLTPSSQPQQPCSPLLGASVTELTSWVQQQGQPAYRGKQLHDWIYHKGVRSLTDISVFSKQWRAAVADVPIGRSTIHHRSVASDGTVKYLLQLSDGEIVEAVGIPTDKRLTVCVSTQVGCPMACDFCATGKGGYKRNLERHEIVDQVLTVQEDFQQRVSHVVFMGMGEPLLNTENVLAGLRSLNQDVGIGQRSLTLSTVGIRDRISELAEHHLQVTLAVSLHAPNQALREQLIPSARSYHIEDLLAECREYVAITGRRISFEYILLAGVNDLPEHALELSKHLRGFQNHVNLIPYNSIDEVDYKRPSGDRIQAFLTVLQQQHIAVSVRYSRGLEADAACGQLRTKASR</sequence>
<gene>
    <name evidence="1" type="primary">rlmN</name>
    <name type="ordered locus">all0355</name>
</gene>
<name>RLMN_NOSS1</name>
<accession>Q8YZV0</accession>
<feature type="chain" id="PRO_0000350012" description="Probable dual-specificity RNA methyltransferase RlmN">
    <location>
        <begin position="1"/>
        <end position="355"/>
    </location>
</feature>
<feature type="domain" description="Radical SAM core" evidence="2">
    <location>
        <begin position="113"/>
        <end position="341"/>
    </location>
</feature>
<feature type="region of interest" description="Disordered" evidence="3">
    <location>
        <begin position="1"/>
        <end position="20"/>
    </location>
</feature>
<feature type="active site" description="Proton acceptor" evidence="1">
    <location>
        <position position="107"/>
    </location>
</feature>
<feature type="active site" description="S-methylcysteine intermediate" evidence="1">
    <location>
        <position position="346"/>
    </location>
</feature>
<feature type="binding site" evidence="1">
    <location>
        <position position="127"/>
    </location>
    <ligand>
        <name>[4Fe-4S] cluster</name>
        <dbReference type="ChEBI" id="CHEBI:49883"/>
        <note>4Fe-4S-S-AdoMet</note>
    </ligand>
</feature>
<feature type="binding site" evidence="1">
    <location>
        <position position="131"/>
    </location>
    <ligand>
        <name>[4Fe-4S] cluster</name>
        <dbReference type="ChEBI" id="CHEBI:49883"/>
        <note>4Fe-4S-S-AdoMet</note>
    </ligand>
</feature>
<feature type="binding site" evidence="1">
    <location>
        <position position="134"/>
    </location>
    <ligand>
        <name>[4Fe-4S] cluster</name>
        <dbReference type="ChEBI" id="CHEBI:49883"/>
        <note>4Fe-4S-S-AdoMet</note>
    </ligand>
</feature>
<feature type="binding site" evidence="1">
    <location>
        <begin position="174"/>
        <end position="175"/>
    </location>
    <ligand>
        <name>S-adenosyl-L-methionine</name>
        <dbReference type="ChEBI" id="CHEBI:59789"/>
    </ligand>
</feature>
<feature type="binding site" evidence="1">
    <location>
        <position position="204"/>
    </location>
    <ligand>
        <name>S-adenosyl-L-methionine</name>
        <dbReference type="ChEBI" id="CHEBI:59789"/>
    </ligand>
</feature>
<feature type="binding site" evidence="1">
    <location>
        <begin position="227"/>
        <end position="229"/>
    </location>
    <ligand>
        <name>S-adenosyl-L-methionine</name>
        <dbReference type="ChEBI" id="CHEBI:59789"/>
    </ligand>
</feature>
<feature type="binding site" evidence="1">
    <location>
        <position position="303"/>
    </location>
    <ligand>
        <name>S-adenosyl-L-methionine</name>
        <dbReference type="ChEBI" id="CHEBI:59789"/>
    </ligand>
</feature>
<feature type="disulfide bond" description="(transient)" evidence="1">
    <location>
        <begin position="120"/>
        <end position="346"/>
    </location>
</feature>
<organism>
    <name type="scientific">Nostoc sp. (strain PCC 7120 / SAG 25.82 / UTEX 2576)</name>
    <dbReference type="NCBI Taxonomy" id="103690"/>
    <lineage>
        <taxon>Bacteria</taxon>
        <taxon>Bacillati</taxon>
        <taxon>Cyanobacteriota</taxon>
        <taxon>Cyanophyceae</taxon>
        <taxon>Nostocales</taxon>
        <taxon>Nostocaceae</taxon>
        <taxon>Nostoc</taxon>
    </lineage>
</organism>
<keyword id="KW-0004">4Fe-4S</keyword>
<keyword id="KW-0963">Cytoplasm</keyword>
<keyword id="KW-1015">Disulfide bond</keyword>
<keyword id="KW-0408">Iron</keyword>
<keyword id="KW-0411">Iron-sulfur</keyword>
<keyword id="KW-0479">Metal-binding</keyword>
<keyword id="KW-0489">Methyltransferase</keyword>
<keyword id="KW-1185">Reference proteome</keyword>
<keyword id="KW-0698">rRNA processing</keyword>
<keyword id="KW-0949">S-adenosyl-L-methionine</keyword>
<keyword id="KW-0808">Transferase</keyword>
<keyword id="KW-0819">tRNA processing</keyword>
<reference key="1">
    <citation type="journal article" date="2001" name="DNA Res.">
        <title>Complete genomic sequence of the filamentous nitrogen-fixing cyanobacterium Anabaena sp. strain PCC 7120.</title>
        <authorList>
            <person name="Kaneko T."/>
            <person name="Nakamura Y."/>
            <person name="Wolk C.P."/>
            <person name="Kuritz T."/>
            <person name="Sasamoto S."/>
            <person name="Watanabe A."/>
            <person name="Iriguchi M."/>
            <person name="Ishikawa A."/>
            <person name="Kawashima K."/>
            <person name="Kimura T."/>
            <person name="Kishida Y."/>
            <person name="Kohara M."/>
            <person name="Matsumoto M."/>
            <person name="Matsuno A."/>
            <person name="Muraki A."/>
            <person name="Nakazaki N."/>
            <person name="Shimpo S."/>
            <person name="Sugimoto M."/>
            <person name="Takazawa M."/>
            <person name="Yamada M."/>
            <person name="Yasuda M."/>
            <person name="Tabata S."/>
        </authorList>
    </citation>
    <scope>NUCLEOTIDE SEQUENCE [LARGE SCALE GENOMIC DNA]</scope>
    <source>
        <strain>PCC 7120 / SAG 25.82 / UTEX 2576</strain>
    </source>
</reference>
<proteinExistence type="inferred from homology"/>
<dbReference type="EC" id="2.1.1.192" evidence="1"/>
<dbReference type="EMBL" id="BA000019">
    <property type="protein sequence ID" value="BAB72313.1"/>
    <property type="status" value="ALT_INIT"/>
    <property type="molecule type" value="Genomic_DNA"/>
</dbReference>
<dbReference type="PIR" id="AB1851">
    <property type="entry name" value="AB1851"/>
</dbReference>
<dbReference type="RefSeq" id="WP_044520589.1">
    <property type="nucleotide sequence ID" value="NC_003272.1"/>
</dbReference>
<dbReference type="SMR" id="Q8YZV0"/>
<dbReference type="STRING" id="103690.gene:10492363"/>
<dbReference type="KEGG" id="ana:all0355"/>
<dbReference type="eggNOG" id="COG0820">
    <property type="taxonomic scope" value="Bacteria"/>
</dbReference>
<dbReference type="OrthoDB" id="9793973at2"/>
<dbReference type="Proteomes" id="UP000002483">
    <property type="component" value="Chromosome"/>
</dbReference>
<dbReference type="GO" id="GO:0005737">
    <property type="term" value="C:cytoplasm"/>
    <property type="evidence" value="ECO:0007669"/>
    <property type="project" value="UniProtKB-SubCell"/>
</dbReference>
<dbReference type="GO" id="GO:0051539">
    <property type="term" value="F:4 iron, 4 sulfur cluster binding"/>
    <property type="evidence" value="ECO:0007669"/>
    <property type="project" value="UniProtKB-UniRule"/>
</dbReference>
<dbReference type="GO" id="GO:0046872">
    <property type="term" value="F:metal ion binding"/>
    <property type="evidence" value="ECO:0007669"/>
    <property type="project" value="UniProtKB-KW"/>
</dbReference>
<dbReference type="GO" id="GO:0070040">
    <property type="term" value="F:rRNA (adenine(2503)-C2-)-methyltransferase activity"/>
    <property type="evidence" value="ECO:0007669"/>
    <property type="project" value="UniProtKB-UniRule"/>
</dbReference>
<dbReference type="GO" id="GO:0019843">
    <property type="term" value="F:rRNA binding"/>
    <property type="evidence" value="ECO:0007669"/>
    <property type="project" value="UniProtKB-UniRule"/>
</dbReference>
<dbReference type="GO" id="GO:0002935">
    <property type="term" value="F:tRNA (adenine(37)-C2)-methyltransferase activity"/>
    <property type="evidence" value="ECO:0007669"/>
    <property type="project" value="UniProtKB-UniRule"/>
</dbReference>
<dbReference type="GO" id="GO:0000049">
    <property type="term" value="F:tRNA binding"/>
    <property type="evidence" value="ECO:0007669"/>
    <property type="project" value="UniProtKB-UniRule"/>
</dbReference>
<dbReference type="GO" id="GO:0070475">
    <property type="term" value="P:rRNA base methylation"/>
    <property type="evidence" value="ECO:0007669"/>
    <property type="project" value="UniProtKB-UniRule"/>
</dbReference>
<dbReference type="GO" id="GO:0030488">
    <property type="term" value="P:tRNA methylation"/>
    <property type="evidence" value="ECO:0007669"/>
    <property type="project" value="UniProtKB-UniRule"/>
</dbReference>
<dbReference type="CDD" id="cd01335">
    <property type="entry name" value="Radical_SAM"/>
    <property type="match status" value="1"/>
</dbReference>
<dbReference type="FunFam" id="3.20.20.70:FF:000014">
    <property type="entry name" value="Probable dual-specificity RNA methyltransferase RlmN"/>
    <property type="match status" value="1"/>
</dbReference>
<dbReference type="Gene3D" id="1.10.150.530">
    <property type="match status" value="1"/>
</dbReference>
<dbReference type="Gene3D" id="3.20.20.70">
    <property type="entry name" value="Aldolase class I"/>
    <property type="match status" value="1"/>
</dbReference>
<dbReference type="HAMAP" id="MF_01849">
    <property type="entry name" value="RNA_methyltr_RlmN"/>
    <property type="match status" value="1"/>
</dbReference>
<dbReference type="InterPro" id="IPR013785">
    <property type="entry name" value="Aldolase_TIM"/>
</dbReference>
<dbReference type="InterPro" id="IPR040072">
    <property type="entry name" value="Methyltransferase_A"/>
</dbReference>
<dbReference type="InterPro" id="IPR048641">
    <property type="entry name" value="RlmN_N"/>
</dbReference>
<dbReference type="InterPro" id="IPR027492">
    <property type="entry name" value="RNA_MTrfase_RlmN"/>
</dbReference>
<dbReference type="InterPro" id="IPR004383">
    <property type="entry name" value="rRNA_lsu_MTrfase_RlmN/Cfr"/>
</dbReference>
<dbReference type="InterPro" id="IPR007197">
    <property type="entry name" value="rSAM"/>
</dbReference>
<dbReference type="NCBIfam" id="TIGR00048">
    <property type="entry name" value="rRNA_mod_RlmN"/>
    <property type="match status" value="1"/>
</dbReference>
<dbReference type="PANTHER" id="PTHR30544">
    <property type="entry name" value="23S RRNA METHYLTRANSFERASE"/>
    <property type="match status" value="1"/>
</dbReference>
<dbReference type="PANTHER" id="PTHR30544:SF5">
    <property type="entry name" value="RADICAL SAM CORE DOMAIN-CONTAINING PROTEIN"/>
    <property type="match status" value="1"/>
</dbReference>
<dbReference type="Pfam" id="PF04055">
    <property type="entry name" value="Radical_SAM"/>
    <property type="match status" value="1"/>
</dbReference>
<dbReference type="Pfam" id="PF21016">
    <property type="entry name" value="RlmN_N"/>
    <property type="match status" value="1"/>
</dbReference>
<dbReference type="PIRSF" id="PIRSF006004">
    <property type="entry name" value="CHP00048"/>
    <property type="match status" value="1"/>
</dbReference>
<dbReference type="SFLD" id="SFLDF00275">
    <property type="entry name" value="adenosine_C2_methyltransferase"/>
    <property type="match status" value="1"/>
</dbReference>
<dbReference type="SFLD" id="SFLDS00029">
    <property type="entry name" value="Radical_SAM"/>
    <property type="match status" value="1"/>
</dbReference>
<dbReference type="SUPFAM" id="SSF102114">
    <property type="entry name" value="Radical SAM enzymes"/>
    <property type="match status" value="1"/>
</dbReference>
<dbReference type="PROSITE" id="PS51918">
    <property type="entry name" value="RADICAL_SAM"/>
    <property type="match status" value="1"/>
</dbReference>